<accession>Q65PK0</accession>
<accession>Q62ZZ0</accession>
<sequence length="107" mass="11838">MRGGMGNMQKMMKQMQKMQKDMQKAQEELAEKVLEGTAGGGMVTVKVNGQKEVIDVIIKEEVVDPEDVEMLQDLVLAATNDALKKVDEVTNETMGKFTKGMNMPGLF</sequence>
<dbReference type="EMBL" id="CP000002">
    <property type="protein sequence ID" value="AAU21668.2"/>
    <property type="molecule type" value="Genomic_DNA"/>
</dbReference>
<dbReference type="EMBL" id="AE017333">
    <property type="protein sequence ID" value="AAU39014.1"/>
    <property type="molecule type" value="Genomic_DNA"/>
</dbReference>
<dbReference type="RefSeq" id="WP_003178138.1">
    <property type="nucleotide sequence ID" value="NC_006322.1"/>
</dbReference>
<dbReference type="SMR" id="Q65PK0"/>
<dbReference type="STRING" id="279010.BL02358"/>
<dbReference type="KEGG" id="bld:BLi00029"/>
<dbReference type="KEGG" id="bli:BL02358"/>
<dbReference type="eggNOG" id="COG0718">
    <property type="taxonomic scope" value="Bacteria"/>
</dbReference>
<dbReference type="HOGENOM" id="CLU_140930_1_0_9"/>
<dbReference type="Proteomes" id="UP000000606">
    <property type="component" value="Chromosome"/>
</dbReference>
<dbReference type="GO" id="GO:0043590">
    <property type="term" value="C:bacterial nucleoid"/>
    <property type="evidence" value="ECO:0007669"/>
    <property type="project" value="UniProtKB-UniRule"/>
</dbReference>
<dbReference type="GO" id="GO:0005829">
    <property type="term" value="C:cytosol"/>
    <property type="evidence" value="ECO:0007669"/>
    <property type="project" value="TreeGrafter"/>
</dbReference>
<dbReference type="GO" id="GO:0003677">
    <property type="term" value="F:DNA binding"/>
    <property type="evidence" value="ECO:0007669"/>
    <property type="project" value="UniProtKB-UniRule"/>
</dbReference>
<dbReference type="FunFam" id="3.30.1310.10:FF:000002">
    <property type="entry name" value="Nucleoid-associated protein IKC_06587"/>
    <property type="match status" value="1"/>
</dbReference>
<dbReference type="Gene3D" id="3.30.1310.10">
    <property type="entry name" value="Nucleoid-associated protein YbaB-like domain"/>
    <property type="match status" value="1"/>
</dbReference>
<dbReference type="HAMAP" id="MF_00274">
    <property type="entry name" value="DNA_YbaB_EbfC"/>
    <property type="match status" value="1"/>
</dbReference>
<dbReference type="InterPro" id="IPR036894">
    <property type="entry name" value="YbaB-like_sf"/>
</dbReference>
<dbReference type="InterPro" id="IPR004401">
    <property type="entry name" value="YbaB/EbfC"/>
</dbReference>
<dbReference type="NCBIfam" id="TIGR00103">
    <property type="entry name" value="DNA_YbaB_EbfC"/>
    <property type="match status" value="1"/>
</dbReference>
<dbReference type="PANTHER" id="PTHR33449">
    <property type="entry name" value="NUCLEOID-ASSOCIATED PROTEIN YBAB"/>
    <property type="match status" value="1"/>
</dbReference>
<dbReference type="PANTHER" id="PTHR33449:SF1">
    <property type="entry name" value="NUCLEOID-ASSOCIATED PROTEIN YBAB"/>
    <property type="match status" value="1"/>
</dbReference>
<dbReference type="Pfam" id="PF02575">
    <property type="entry name" value="YbaB_DNA_bd"/>
    <property type="match status" value="1"/>
</dbReference>
<dbReference type="PIRSF" id="PIRSF004555">
    <property type="entry name" value="UCP004555"/>
    <property type="match status" value="1"/>
</dbReference>
<dbReference type="SUPFAM" id="SSF82607">
    <property type="entry name" value="YbaB-like"/>
    <property type="match status" value="1"/>
</dbReference>
<comment type="function">
    <text evidence="1">Binds to DNA and alters its conformation. May be involved in regulation of gene expression, nucleoid organization and DNA protection.</text>
</comment>
<comment type="subunit">
    <text evidence="1">Homodimer.</text>
</comment>
<comment type="subcellular location">
    <subcellularLocation>
        <location evidence="1">Cytoplasm</location>
        <location evidence="1">Nucleoid</location>
    </subcellularLocation>
</comment>
<comment type="similarity">
    <text evidence="1">Belongs to the YbaB/EbfC family.</text>
</comment>
<gene>
    <name type="ordered locus">BLi00029</name>
    <name type="ordered locus">BL02358</name>
</gene>
<evidence type="ECO:0000255" key="1">
    <source>
        <dbReference type="HAMAP-Rule" id="MF_00274"/>
    </source>
</evidence>
<evidence type="ECO:0000256" key="2">
    <source>
        <dbReference type="SAM" id="MobiDB-lite"/>
    </source>
</evidence>
<keyword id="KW-0963">Cytoplasm</keyword>
<keyword id="KW-0238">DNA-binding</keyword>
<keyword id="KW-1185">Reference proteome</keyword>
<proteinExistence type="inferred from homology"/>
<reference key="1">
    <citation type="journal article" date="2004" name="J. Mol. Microbiol. Biotechnol.">
        <title>The complete genome sequence of Bacillus licheniformis DSM13, an organism with great industrial potential.</title>
        <authorList>
            <person name="Veith B."/>
            <person name="Herzberg C."/>
            <person name="Steckel S."/>
            <person name="Feesche J."/>
            <person name="Maurer K.H."/>
            <person name="Ehrenreich P."/>
            <person name="Baeumer S."/>
            <person name="Henne A."/>
            <person name="Liesegang H."/>
            <person name="Merkl R."/>
            <person name="Ehrenreich A."/>
            <person name="Gottschalk G."/>
        </authorList>
    </citation>
    <scope>NUCLEOTIDE SEQUENCE [LARGE SCALE GENOMIC DNA]</scope>
    <source>
        <strain>ATCC 14580 / DSM 13 / JCM 2505 / CCUG 7422 / NBRC 12200 / NCIMB 9375 / NCTC 10341 / NRRL NRS-1264 / Gibson 46</strain>
    </source>
</reference>
<reference key="2">
    <citation type="journal article" date="2004" name="Genome Biol.">
        <title>Complete genome sequence of the industrial bacterium Bacillus licheniformis and comparisons with closely related Bacillus species.</title>
        <authorList>
            <person name="Rey M.W."/>
            <person name="Ramaiya P."/>
            <person name="Nelson B.A."/>
            <person name="Brody-Karpin S.D."/>
            <person name="Zaretsky E.J."/>
            <person name="Tang M."/>
            <person name="Lopez de Leon A."/>
            <person name="Xiang H."/>
            <person name="Gusti V."/>
            <person name="Clausen I.G."/>
            <person name="Olsen P.B."/>
            <person name="Rasmussen M.D."/>
            <person name="Andersen J.T."/>
            <person name="Joergensen P.L."/>
            <person name="Larsen T.S."/>
            <person name="Sorokin A."/>
            <person name="Bolotin A."/>
            <person name="Lapidus A."/>
            <person name="Galleron N."/>
            <person name="Ehrlich S.D."/>
            <person name="Berka R.M."/>
        </authorList>
    </citation>
    <scope>NUCLEOTIDE SEQUENCE [LARGE SCALE GENOMIC DNA]</scope>
    <source>
        <strain>ATCC 14580 / DSM 13 / JCM 2505 / CCUG 7422 / NBRC 12200 / NCIMB 9375 / NCTC 10341 / NRRL NRS-1264 / Gibson 46</strain>
    </source>
</reference>
<protein>
    <recommendedName>
        <fullName evidence="1">Nucleoid-associated protein BLi00029/BL02358</fullName>
    </recommendedName>
</protein>
<organism>
    <name type="scientific">Bacillus licheniformis (strain ATCC 14580 / DSM 13 / JCM 2505 / CCUG 7422 / NBRC 12200 / NCIMB 9375 / NCTC 10341 / NRRL NRS-1264 / Gibson 46)</name>
    <dbReference type="NCBI Taxonomy" id="279010"/>
    <lineage>
        <taxon>Bacteria</taxon>
        <taxon>Bacillati</taxon>
        <taxon>Bacillota</taxon>
        <taxon>Bacilli</taxon>
        <taxon>Bacillales</taxon>
        <taxon>Bacillaceae</taxon>
        <taxon>Bacillus</taxon>
    </lineage>
</organism>
<feature type="chain" id="PRO_1000003687" description="Nucleoid-associated protein BLi00029/BL02358">
    <location>
        <begin position="1"/>
        <end position="107"/>
    </location>
</feature>
<feature type="region of interest" description="Disordered" evidence="2">
    <location>
        <begin position="1"/>
        <end position="27"/>
    </location>
</feature>
<feature type="compositionally biased region" description="Low complexity" evidence="2">
    <location>
        <begin position="8"/>
        <end position="17"/>
    </location>
</feature>
<feature type="compositionally biased region" description="Basic and acidic residues" evidence="2">
    <location>
        <begin position="18"/>
        <end position="27"/>
    </location>
</feature>
<name>Y2358_BACLD</name>